<comment type="function">
    <text>Collagen VI acts as a cell-binding protein.</text>
</comment>
<comment type="subunit">
    <text>Trimers composed of three different chains: alpha 1(VI), alpha 2(VI), and alpha 3(VI).</text>
</comment>
<comment type="subcellular location">
    <subcellularLocation>
        <location evidence="1">Secreted</location>
        <location evidence="1">Extracellular space</location>
        <location evidence="1">Extracellular matrix</location>
    </subcellularLocation>
</comment>
<comment type="PTM">
    <text>Prolines at the third position of the tripeptide repeating unit (G-X-Y) are hydroxylated in some or all of the chains.</text>
</comment>
<comment type="similarity">
    <text evidence="5">Belongs to the type VI collagen family.</text>
</comment>
<sequence length="1019" mass="107984">MGLHDSFLALLLLLGGAWAQQAEINARVLRAQDCPVDLFFVLDTSESVALRVKPFGDLVAQVKDFTNRFIDKLTERYFRCDRFLAWNAGALHYSDSVVIIKDLTAMPSGRAELKNSVSAINYIGKGTHTDCAIKQGIERLLLGGSHLKENKYLIVVTDGHPLEGYKEPCGGLDDAANEAKHLGIKVFSVAISPHHLDQRLNIIATDHAYRRNFTATSLKPTRDLDVEETINNIIEMIKDNMEQSCCSFECHPPRGPPGPPGDPGHEGERGKPGLPGQKGDAGDPGRPGDMGPVGYQGMKGDKGSRGEKGSRGAKGAKGEKGKRGIDGIDGMKGEAGYPGLPGCKGSPGFDGTQGPPGPKGDPGAYGPKGGKGEPGEDGKPGRQGIPGSPGEKGAPGNRGEPGPLGETGDEGSPGADGPPGERGSNGERGPPGSPGDRGPRGDLGEPGPPGDQGREGPLGPPGDQGEPGPPGPKGYRGDDGPRGNEGPKGSPGAPGLPGDPGLMGERGEDGPPGNGTIGFPGAPGQQGDRGDPGINGTKGYVGPKGDEGEAGDPGNDNPTAGPSGIKGAKGHRGPEGRPGPPGPVGPPGPDECEILDIIMKMCSCCECTCGPVDLLFVLDSSESIGLQNFQIAKDFIIKVIDRLSKDERVKFEPGESRVGVVQYSHNNTQELVAMGDANIDNIGALKQAVKNLKWIAGGTHTGEALQFSKENLLRRFTSNNNVAIVITDGRSDTLRDRTPLTSLCEVTPVVSLGIGDIFRNNPNPDQLNDIACLGMPRRQGLSIQRDNYAELLDDSFLQNITSYVCREKKCPDYTCPITFANPADIMLLVDSSTSVGSKNFDTTKNFVKRLAERFLEASKPAEDSVRVSVVQYSGRNQQKVEVPFQRNYTVIAKAVDNMEFMNEATDVNAALQYIMGLYQRSSRSGAKKKVLVFSDGNSQGITARAIERTVQEVQQAGIEVYVLAVGSQVNEPNVRVLVTGKSTNYDVAYGERHLFRVPDYTSLLRGVFYQTVSRKIAVD</sequence>
<proteinExistence type="evidence at transcript level"/>
<feature type="signal peptide">
    <location>
        <begin position="1"/>
        <end position="19"/>
    </location>
</feature>
<feature type="chain" id="PRO_0000005760" description="Collagen alpha-1(VI) chain">
    <location>
        <begin position="20"/>
        <end position="1019"/>
    </location>
</feature>
<feature type="domain" description="VWFA 1" evidence="3">
    <location>
        <begin position="37"/>
        <end position="233"/>
    </location>
</feature>
<feature type="domain" description="VWFA 2" evidence="3">
    <location>
        <begin position="613"/>
        <end position="800"/>
    </location>
</feature>
<feature type="domain" description="VWFA 3" evidence="3">
    <location>
        <begin position="824"/>
        <end position="1012"/>
    </location>
</feature>
<feature type="region of interest" description="Disordered" evidence="4">
    <location>
        <begin position="248"/>
        <end position="588"/>
    </location>
</feature>
<feature type="short sequence motif" description="Cell attachment site">
    <location>
        <begin position="476"/>
        <end position="478"/>
    </location>
</feature>
<feature type="short sequence motif" description="Cell attachment site">
    <location>
        <begin position="529"/>
        <end position="531"/>
    </location>
</feature>
<feature type="compositionally biased region" description="Pro residues" evidence="4">
    <location>
        <begin position="253"/>
        <end position="262"/>
    </location>
</feature>
<feature type="compositionally biased region" description="Basic and acidic residues" evidence="4">
    <location>
        <begin position="299"/>
        <end position="332"/>
    </location>
</feature>
<feature type="compositionally biased region" description="Basic and acidic residues" evidence="4">
    <location>
        <begin position="370"/>
        <end position="380"/>
    </location>
</feature>
<feature type="compositionally biased region" description="Low complexity" evidence="4">
    <location>
        <begin position="427"/>
        <end position="436"/>
    </location>
</feature>
<feature type="compositionally biased region" description="Pro residues" evidence="4">
    <location>
        <begin position="577"/>
        <end position="588"/>
    </location>
</feature>
<feature type="glycosylation site" description="N-linked (GlcNAc...) asparagine" evidence="2">
    <location>
        <position position="212"/>
    </location>
</feature>
<feature type="glycosylation site" description="N-linked (GlcNAc...) asparagine" evidence="2">
    <location>
        <position position="514"/>
    </location>
</feature>
<feature type="glycosylation site" description="N-linked (GlcNAc...) asparagine" evidence="2">
    <location>
        <position position="535"/>
    </location>
</feature>
<feature type="glycosylation site" description="N-linked (GlcNAc...) asparagine" evidence="2">
    <location>
        <position position="799"/>
    </location>
</feature>
<feature type="glycosylation site" description="N-linked (GlcNAc...) asparagine" evidence="2">
    <location>
        <position position="887"/>
    </location>
</feature>
<gene>
    <name type="primary">COL6A1</name>
</gene>
<dbReference type="EMBL" id="X64458">
    <property type="protein sequence ID" value="CAA45788.1"/>
    <property type="molecule type" value="Genomic_DNA"/>
</dbReference>
<dbReference type="EMBL" id="X57998">
    <property type="protein sequence ID" value="CAA41062.1"/>
    <property type="molecule type" value="Genomic_DNA"/>
</dbReference>
<dbReference type="EMBL" id="J04598">
    <property type="protein sequence ID" value="AAB59954.1"/>
    <property type="molecule type" value="mRNA"/>
</dbReference>
<dbReference type="EMBL" id="X57987">
    <property type="protein sequence ID" value="CAA41053.1"/>
    <property type="molecule type" value="Genomic_DNA"/>
</dbReference>
<dbReference type="PIR" id="A32856">
    <property type="entry name" value="A32856"/>
</dbReference>
<dbReference type="RefSeq" id="NP_990438.1">
    <property type="nucleotide sequence ID" value="NM_205107.1"/>
</dbReference>
<dbReference type="SMR" id="P20785"/>
<dbReference type="FunCoup" id="P20785">
    <property type="interactions" value="1413"/>
</dbReference>
<dbReference type="STRING" id="9031.ENSGALP00000057372"/>
<dbReference type="GlyCosmos" id="P20785">
    <property type="glycosylation" value="5 sites, No reported glycans"/>
</dbReference>
<dbReference type="GlyGen" id="P20785">
    <property type="glycosylation" value="5 sites"/>
</dbReference>
<dbReference type="PaxDb" id="9031-ENSGALP00000038878"/>
<dbReference type="GeneID" id="396000"/>
<dbReference type="KEGG" id="gga:396000"/>
<dbReference type="CTD" id="1291"/>
<dbReference type="VEuPathDB" id="HostDB:geneid_396000"/>
<dbReference type="eggNOG" id="KOG3544">
    <property type="taxonomic scope" value="Eukaryota"/>
</dbReference>
<dbReference type="InParanoid" id="P20785"/>
<dbReference type="OrthoDB" id="8889285at2759"/>
<dbReference type="PhylomeDB" id="P20785"/>
<dbReference type="PRO" id="PR:P20785"/>
<dbReference type="Proteomes" id="UP000000539">
    <property type="component" value="Unassembled WGS sequence"/>
</dbReference>
<dbReference type="GO" id="GO:0005604">
    <property type="term" value="C:basement membrane"/>
    <property type="evidence" value="ECO:0000318"/>
    <property type="project" value="GO_Central"/>
</dbReference>
<dbReference type="GO" id="GO:0005581">
    <property type="term" value="C:collagen trimer"/>
    <property type="evidence" value="ECO:0007669"/>
    <property type="project" value="UniProtKB-KW"/>
</dbReference>
<dbReference type="GO" id="GO:0005615">
    <property type="term" value="C:extracellular space"/>
    <property type="evidence" value="ECO:0000318"/>
    <property type="project" value="GO_Central"/>
</dbReference>
<dbReference type="GO" id="GO:0030020">
    <property type="term" value="F:extracellular matrix structural constituent conferring tensile strength"/>
    <property type="evidence" value="ECO:0000318"/>
    <property type="project" value="GO_Central"/>
</dbReference>
<dbReference type="GO" id="GO:0007155">
    <property type="term" value="P:cell adhesion"/>
    <property type="evidence" value="ECO:0007669"/>
    <property type="project" value="UniProtKB-KW"/>
</dbReference>
<dbReference type="CDD" id="cd01480">
    <property type="entry name" value="vWA_collagen_alpha_1-VI-type"/>
    <property type="match status" value="3"/>
</dbReference>
<dbReference type="FunFam" id="3.40.50.410:FF:000026">
    <property type="entry name" value="Collagen, type VI, alpha 1"/>
    <property type="match status" value="1"/>
</dbReference>
<dbReference type="FunFam" id="3.40.50.410:FF:000050">
    <property type="entry name" value="Collagen, type VI, alpha 1"/>
    <property type="match status" value="1"/>
</dbReference>
<dbReference type="FunFam" id="3.40.50.410:FF:000060">
    <property type="entry name" value="Collagen, type VI, alpha 1"/>
    <property type="match status" value="1"/>
</dbReference>
<dbReference type="Gene3D" id="3.40.50.410">
    <property type="entry name" value="von Willebrand factor, type A domain"/>
    <property type="match status" value="3"/>
</dbReference>
<dbReference type="InterPro" id="IPR008160">
    <property type="entry name" value="Collagen"/>
</dbReference>
<dbReference type="InterPro" id="IPR050525">
    <property type="entry name" value="ECM_Assembly_Org"/>
</dbReference>
<dbReference type="InterPro" id="IPR002035">
    <property type="entry name" value="VWF_A"/>
</dbReference>
<dbReference type="InterPro" id="IPR036465">
    <property type="entry name" value="vWFA_dom_sf"/>
</dbReference>
<dbReference type="PANTHER" id="PTHR24020">
    <property type="entry name" value="COLLAGEN ALPHA"/>
    <property type="match status" value="1"/>
</dbReference>
<dbReference type="PANTHER" id="PTHR24020:SF18">
    <property type="entry name" value="COLLAGEN ALPHA-1(VI) CHAIN"/>
    <property type="match status" value="1"/>
</dbReference>
<dbReference type="Pfam" id="PF01391">
    <property type="entry name" value="Collagen"/>
    <property type="match status" value="6"/>
</dbReference>
<dbReference type="Pfam" id="PF00092">
    <property type="entry name" value="VWA"/>
    <property type="match status" value="3"/>
</dbReference>
<dbReference type="PRINTS" id="PR00453">
    <property type="entry name" value="VWFADOMAIN"/>
</dbReference>
<dbReference type="SMART" id="SM00327">
    <property type="entry name" value="VWA"/>
    <property type="match status" value="3"/>
</dbReference>
<dbReference type="SUPFAM" id="SSF53300">
    <property type="entry name" value="vWA-like"/>
    <property type="match status" value="3"/>
</dbReference>
<dbReference type="PROSITE" id="PS50234">
    <property type="entry name" value="VWFA"/>
    <property type="match status" value="3"/>
</dbReference>
<organism>
    <name type="scientific">Gallus gallus</name>
    <name type="common">Chicken</name>
    <dbReference type="NCBI Taxonomy" id="9031"/>
    <lineage>
        <taxon>Eukaryota</taxon>
        <taxon>Metazoa</taxon>
        <taxon>Chordata</taxon>
        <taxon>Craniata</taxon>
        <taxon>Vertebrata</taxon>
        <taxon>Euteleostomi</taxon>
        <taxon>Archelosauria</taxon>
        <taxon>Archosauria</taxon>
        <taxon>Dinosauria</taxon>
        <taxon>Saurischia</taxon>
        <taxon>Theropoda</taxon>
        <taxon>Coelurosauria</taxon>
        <taxon>Aves</taxon>
        <taxon>Neognathae</taxon>
        <taxon>Galloanserae</taxon>
        <taxon>Galliformes</taxon>
        <taxon>Phasianidae</taxon>
        <taxon>Phasianinae</taxon>
        <taxon>Gallus</taxon>
    </lineage>
</organism>
<accession>P20785</accession>
<keyword id="KW-0130">Cell adhesion</keyword>
<keyword id="KW-0176">Collagen</keyword>
<keyword id="KW-0272">Extracellular matrix</keyword>
<keyword id="KW-0325">Glycoprotein</keyword>
<keyword id="KW-0379">Hydroxylation</keyword>
<keyword id="KW-1185">Reference proteome</keyword>
<keyword id="KW-0677">Repeat</keyword>
<keyword id="KW-0964">Secreted</keyword>
<keyword id="KW-0732">Signal</keyword>
<protein>
    <recommendedName>
        <fullName>Collagen alpha-1(VI) chain</fullName>
    </recommendedName>
</protein>
<name>CO6A1_CHICK</name>
<reference key="1">
    <citation type="journal article" date="1992" name="Eur. J. Biochem.">
        <title>Structural comparison of the chicken genes for alpha 1(VI) and alpha 2(VI) collagen.</title>
        <authorList>
            <person name="Walchli C."/>
            <person name="Koller E."/>
            <person name="Trueb J."/>
            <person name="Trueb B."/>
        </authorList>
    </citation>
    <scope>NUCLEOTIDE SEQUENCE [GENOMIC DNA]</scope>
</reference>
<reference key="2">
    <citation type="journal article" date="1989" name="J. Biol. Chem.">
        <title>Alpha 1 chain of chick type VI collagen. The complete cDNA sequence reveals a hybrid molecule made of one short collagen and three von Willebrand factor type A-like domains.</title>
        <authorList>
            <person name="Bonaldo P."/>
            <person name="Russo V."/>
            <person name="Bucciotti F."/>
            <person name="Bressan G.M."/>
            <person name="Colombatti A."/>
        </authorList>
    </citation>
    <scope>NUCLEOTIDE SEQUENCE [MRNA]</scope>
</reference>
<reference key="3">
    <citation type="journal article" date="1992" name="Eur. J. Biochem.">
        <title>Characterization of the chicken alpha 1(VI) collagen promoter.</title>
        <authorList>
            <person name="Koller E."/>
            <person name="Trueb B."/>
        </authorList>
    </citation>
    <scope>NUCLEOTIDE SEQUENCE [GENOMIC DNA] OF 1-75</scope>
</reference>
<evidence type="ECO:0000250" key="1"/>
<evidence type="ECO:0000255" key="2"/>
<evidence type="ECO:0000255" key="3">
    <source>
        <dbReference type="PROSITE-ProRule" id="PRU00219"/>
    </source>
</evidence>
<evidence type="ECO:0000256" key="4">
    <source>
        <dbReference type="SAM" id="MobiDB-lite"/>
    </source>
</evidence>
<evidence type="ECO:0000305" key="5"/>